<name>SWP9_NOSB1</name>
<accession>R0MLT0</accession>
<accession>B3STP3</accession>
<protein>
    <recommendedName>
        <fullName evidence="5">Spore wall protein 9</fullName>
    </recommendedName>
</protein>
<organism evidence="8">
    <name type="scientific">Nosema bombycis (strain CQ1 / CVCC 102059)</name>
    <name type="common">Microsporidian parasite</name>
    <name type="synonym">Pebrine of silkworm</name>
    <dbReference type="NCBI Taxonomy" id="578461"/>
    <lineage>
        <taxon>Eukaryota</taxon>
        <taxon>Fungi</taxon>
        <taxon>Fungi incertae sedis</taxon>
        <taxon>Microsporidia</taxon>
        <taxon>Nosematidae</taxon>
        <taxon>Nosema</taxon>
    </lineage>
</organism>
<dbReference type="EMBL" id="KB908967">
    <property type="protein sequence ID" value="EOB13793.1"/>
    <property type="molecule type" value="Genomic_DNA"/>
</dbReference>
<dbReference type="EMBL" id="EF683109">
    <property type="protein sequence ID" value="ABV48897.1"/>
    <property type="molecule type" value="Genomic_DNA"/>
</dbReference>
<dbReference type="SMR" id="R0MLT0"/>
<dbReference type="STRING" id="578461.R0MLT0"/>
<dbReference type="EnsemblFungi" id="EOB13793">
    <property type="protein sequence ID" value="EOB13793"/>
    <property type="gene ID" value="NBO_59g0015"/>
</dbReference>
<dbReference type="VEuPathDB" id="MicrosporidiaDB:NBO_59g0015"/>
<dbReference type="HOGENOM" id="CLU_723675_0_0_1"/>
<dbReference type="OMA" id="LEPEWHY"/>
<dbReference type="OrthoDB" id="2193915at2759"/>
<dbReference type="Proteomes" id="UP000016927">
    <property type="component" value="Unassembled WGS sequence"/>
</dbReference>
<dbReference type="GO" id="GO:0005737">
    <property type="term" value="C:cytoplasm"/>
    <property type="evidence" value="ECO:0000314"/>
    <property type="project" value="UniProtKB"/>
</dbReference>
<dbReference type="GO" id="GO:0044099">
    <property type="term" value="C:polar tube"/>
    <property type="evidence" value="ECO:0000314"/>
    <property type="project" value="UniProtKB"/>
</dbReference>
<dbReference type="GO" id="GO:0031160">
    <property type="term" value="C:spore wall"/>
    <property type="evidence" value="ECO:0000314"/>
    <property type="project" value="UniProtKB"/>
</dbReference>
<dbReference type="GO" id="GO:0007155">
    <property type="term" value="P:cell adhesion"/>
    <property type="evidence" value="ECO:0007669"/>
    <property type="project" value="UniProtKB-KW"/>
</dbReference>
<keyword id="KW-0130">Cell adhesion</keyword>
<keyword id="KW-0963">Cytoplasm</keyword>
<keyword id="KW-1185">Reference proteome</keyword>
<keyword id="KW-0732">Signal</keyword>
<reference evidence="8" key="1">
    <citation type="journal article" date="2013" name="BMC Genomics">
        <title>Comparative genomics of parasitic silkworm microsporidia reveal an association between genome expansion and host adaptation.</title>
        <authorList>
            <person name="Pan G."/>
            <person name="Xu J."/>
            <person name="Li T."/>
            <person name="Xia Q."/>
            <person name="Liu S.L."/>
            <person name="Zhang G."/>
            <person name="Li S."/>
            <person name="Li C."/>
            <person name="Liu H."/>
            <person name="Yang L."/>
            <person name="Liu T."/>
            <person name="Zhang X."/>
            <person name="Wu Z."/>
            <person name="Fan W."/>
            <person name="Dang X."/>
            <person name="Xiang H."/>
            <person name="Tao M."/>
            <person name="Li Y."/>
            <person name="Hu J."/>
            <person name="Li Z."/>
            <person name="Lin L."/>
            <person name="Luo J."/>
            <person name="Geng L."/>
            <person name="Wang L."/>
            <person name="Long M."/>
            <person name="Wan Y."/>
            <person name="He N."/>
            <person name="Zhang Z."/>
            <person name="Lu C."/>
            <person name="Keeling P.J."/>
            <person name="Wang J."/>
            <person name="Xiang Z."/>
            <person name="Zhou Z."/>
        </authorList>
    </citation>
    <scope>NUCLEOTIDE SEQUENCE [LARGE SCALE GENOMIC DNA]</scope>
    <source>
        <strain evidence="8">CQ1 / CVCC 102059</strain>
    </source>
</reference>
<reference evidence="7" key="2">
    <citation type="journal article" date="2008" name="Proteomics">
        <title>Proteomic analysis of spore wall proteins and identification of two spore wall proteins from Nosema bombycis (Microsporidia).</title>
        <authorList>
            <person name="Wu Z."/>
            <person name="Li Y."/>
            <person name="Pan G."/>
            <person name="Tan X."/>
            <person name="Hu J."/>
            <person name="Zhou Z."/>
            <person name="Xiang Z."/>
        </authorList>
    </citation>
    <scope>NUCLEOTIDE SEQUENCE [GENOMIC DNA] OF 37-367</scope>
    <scope>IDENTIFICATION BY MASS SPECTROMETRY</scope>
    <scope>SUBCELLULAR LOCATION</scope>
    <source>
        <strain evidence="4">CQ1 / CVCC 102059</strain>
    </source>
</reference>
<reference evidence="6" key="3">
    <citation type="journal article" date="2015" name="Infect. Immun.">
        <title>Interaction and assembly of two novel proteins in the spore wall of the microsporidian species Nosema bombycis and their roles in adherence to and infection of host cells.</title>
        <authorList>
            <person name="Yang D."/>
            <person name="Pan G."/>
            <person name="Dang X."/>
            <person name="Shi Y."/>
            <person name="Li C."/>
            <person name="Peng P."/>
            <person name="Luo B."/>
            <person name="Bian M."/>
            <person name="Song Y."/>
            <person name="Ma C."/>
            <person name="Chen J."/>
            <person name="Ma Z."/>
            <person name="Geng L."/>
            <person name="Li Z."/>
            <person name="Tian R."/>
            <person name="Wei C."/>
            <person name="Zhou Z."/>
        </authorList>
    </citation>
    <scope>FUNCTION</scope>
    <scope>INTERACTION WITH SWP7</scope>
    <scope>SUBCELLULAR LOCATION</scope>
    <scope>DEVELOPMENTAL STAGE</scope>
    <source>
        <strain evidence="5">CQ1 / CVCC 102059</strain>
    </source>
</reference>
<gene>
    <name evidence="5" type="primary">SWP9</name>
    <name evidence="7" type="ORF">NBO_59g0015</name>
</gene>
<sequence>MSTQPTKTSSTKLRIFKWLFIISTLVAIAIPITRLLMHLYGKIDEKMYARIFMSYRVNSADSFMINGRYKAIKAKAYPTSEERNKFNSIAQEGDKAVLLKYPYPEHFSLEPEWHYTLCDDVFYNLWKIRVNVCEYYKNNKQEDIAGLVTPPKEAKVDRFFRQDPKISDDDYKKLFTGTDENGKGWSSAAVQFIDILLNLINKPEECKLKDGKLNEKFQKDLESLVSQLGYSTEDMKNIANEIPNFFIQFGKAFPTVIHSTVYSRFYYFFLFLTINGNFDFSEVEKTDGMKIEEFNKQTMKVMASVFAQIFAKVYEESYNYEIKDAGFMDKVRAYFSVSDNIDNVKDQTKNINTVKEVLIKNKELLSK</sequence>
<feature type="signal peptide" evidence="1">
    <location>
        <begin position="1"/>
        <end position="29"/>
    </location>
</feature>
<feature type="chain" id="PRO_0000433017" description="Spore wall protein 9">
    <location>
        <begin position="30"/>
        <end position="367"/>
    </location>
</feature>
<feature type="sequence conflict" description="In Ref. 2; ABV48897." evidence="6" ref="2">
    <original>S</original>
    <variation>A</variation>
    <location>
        <position position="186"/>
    </location>
</feature>
<feature type="sequence conflict" description="In Ref. 2; ABV48897." evidence="6" ref="2">
    <original>L</original>
    <variation>F</variation>
    <location>
        <position position="224"/>
    </location>
</feature>
<feature type="sequence conflict" description="In Ref. 2; ABV48897." evidence="6" ref="2">
    <original>T</original>
    <variation>A</variation>
    <location>
        <position position="286"/>
    </location>
</feature>
<feature type="sequence conflict" description="In Ref. 2; ABV48897." evidence="6" ref="2">
    <original>I</original>
    <variation>V</variation>
    <location>
        <position position="322"/>
    </location>
</feature>
<proteinExistence type="evidence at protein level"/>
<evidence type="ECO:0000255" key="1"/>
<evidence type="ECO:0000269" key="2">
    <source>
    </source>
</evidence>
<evidence type="ECO:0000269" key="3">
    <source>
    </source>
</evidence>
<evidence type="ECO:0000303" key="4">
    <source>
    </source>
</evidence>
<evidence type="ECO:0000303" key="5">
    <source>
    </source>
</evidence>
<evidence type="ECO:0000305" key="6"/>
<evidence type="ECO:0000312" key="7">
    <source>
        <dbReference type="EMBL" id="EOB13793.1"/>
    </source>
</evidence>
<evidence type="ECO:0000312" key="8">
    <source>
        <dbReference type="Proteomes" id="UP000016927"/>
    </source>
</evidence>
<comment type="function">
    <text evidence="3">Involved in adherence of spores to the host cell surface and in infection efficiency.</text>
</comment>
<comment type="subunit">
    <text evidence="3">Interacts with SWP7.</text>
</comment>
<comment type="subcellular location">
    <subcellularLocation>
        <location evidence="3">Cytoplasm</location>
    </subcellularLocation>
    <subcellularLocation>
        <location evidence="2 3">Spore wall</location>
    </subcellularLocation>
    <subcellularLocation>
        <location evidence="3">Spore polar tube</location>
    </subcellularLocation>
    <text evidence="3">Localized to the cytoplasm of sporonts, to the cytoplasm and surface coat of sporoblasts and to the spore wall and polar tube of mature spores.</text>
</comment>
<comment type="developmental stage">
    <text evidence="3">Expressed at all developmental stages.</text>
</comment>